<comment type="function">
    <text evidence="1">Probable disease resistance protein.</text>
</comment>
<comment type="subcellular location">
    <subcellularLocation>
        <location evidence="3">Cell membrane</location>
        <topology evidence="3">Lipid-anchor</topology>
    </subcellularLocation>
</comment>
<comment type="domain">
    <text evidence="1">The LRR repeats probably act as specificity determinant of pathogen recognition.</text>
</comment>
<comment type="similarity">
    <text evidence="3">Belongs to the disease resistance NB-LRR family.</text>
</comment>
<comment type="sequence caution" evidence="3">
    <conflict type="erroneous gene model prediction">
        <sequence resource="EMBL-CDS" id="AAC13911"/>
    </conflict>
</comment>
<comment type="sequence caution" evidence="3">
    <conflict type="erroneous translation">
        <sequence resource="EMBL-CDS" id="AAM20459"/>
    </conflict>
    <text>Wrong choice of frame.</text>
</comment>
<comment type="sequence caution" evidence="3">
    <conflict type="erroneous translation">
        <sequence resource="EMBL-CDS" id="AAM91258"/>
    </conflict>
    <text>Wrong choice of frame.</text>
</comment>
<comment type="online information" name="NIB-LRRS">
    <link uri="http://niblrrs.ucdavis.edu"/>
    <text>Functional and comparative genomics of disease resistance gene homologs</text>
</comment>
<keyword id="KW-0067">ATP-binding</keyword>
<keyword id="KW-1003">Cell membrane</keyword>
<keyword id="KW-0433">Leucine-rich repeat</keyword>
<keyword id="KW-0449">Lipoprotein</keyword>
<keyword id="KW-0472">Membrane</keyword>
<keyword id="KW-0519">Myristate</keyword>
<keyword id="KW-0547">Nucleotide-binding</keyword>
<keyword id="KW-0564">Palmitate</keyword>
<keyword id="KW-0611">Plant defense</keyword>
<keyword id="KW-1185">Reference proteome</keyword>
<keyword id="KW-0677">Repeat</keyword>
<feature type="initiator methionine" description="Removed" evidence="2">
    <location>
        <position position="1"/>
    </location>
</feature>
<feature type="chain" id="PRO_0000212749" description="Probable disease resistance protein At1g61300">
    <location>
        <begin position="2"/>
        <end position="762"/>
    </location>
</feature>
<feature type="domain" description="NB-ARC">
    <location>
        <begin position="26"/>
        <end position="329"/>
    </location>
</feature>
<feature type="repeat" description="LRR 1">
    <location>
        <begin position="401"/>
        <end position="422"/>
    </location>
</feature>
<feature type="repeat" description="LRR 2">
    <location>
        <begin position="423"/>
        <end position="444"/>
    </location>
</feature>
<feature type="repeat" description="LRR 3">
    <location>
        <begin position="447"/>
        <end position="470"/>
    </location>
</feature>
<feature type="repeat" description="LRR 4">
    <location>
        <begin position="471"/>
        <end position="493"/>
    </location>
</feature>
<feature type="repeat" description="LRR 5">
    <location>
        <begin position="494"/>
        <end position="516"/>
    </location>
</feature>
<feature type="binding site" evidence="2">
    <location>
        <begin position="68"/>
        <end position="75"/>
    </location>
    <ligand>
        <name>ATP</name>
        <dbReference type="ChEBI" id="CHEBI:30616"/>
    </ligand>
</feature>
<feature type="lipid moiety-binding region" description="N-myristoyl glycine" evidence="2">
    <location>
        <position position="2"/>
    </location>
</feature>
<feature type="lipid moiety-binding region" description="S-palmitoyl cysteine" evidence="2">
    <location>
        <position position="3"/>
    </location>
</feature>
<feature type="lipid moiety-binding region" description="S-palmitoyl cysteine" evidence="2">
    <location>
        <position position="4"/>
    </location>
</feature>
<proteinExistence type="evidence at transcript level"/>
<sequence length="762" mass="87132">MGCCFSVQFSFDDQTLVRIFNFLCGNINRNSFGVEERPTQPTIGQEEMLEKAWNRLMEDRVGIMGLHGMGGVGKTTLFKKIHNKFAKMSSRFDIVIWIVVSKGAKLSKLQEDIAEKLHLCDDLWKNKNESDKATDIHRVLKGKRFVLMLDDIWEKVDLEAIGVPYPSEVNKCKVAFTTRDQKVCGEMGDHKPMQVKCLEPEDAWELFKNKVGDNTLRSDPVIVELAREVAQKCRGLPLALSVIGETMASKTMVQEWEHAIDVLTRSAAEFSNMGNKILPILKYSYDSLGDEHIKSCFLYCALFPEDDEIYNEKLIDYWICEGFIGEDQVIKRARNKGYEMLGTLTLANLLTKVGTEHVVMHDVVREMALWIASDFGKQKENFVVRARVGLHERPEAKDWGAVRRMSLMDNHIEEITCESKCSELTTLFLQSNQLKNLSGEFIRYMQKLVVLDLSYNRDFNKLPEQISGLVSLQFLDLSNTSIKQLPVGLKKLKKLTFLNLAYTVRLCSISGISRLLSLRLLRLLGSKVHGDASVLKELQKLQNLQHLAITLSAELSLNQRLANLISILGIEGFLQKPFDLSFLASMENLSSLWVKNSYFSEIKCRESETASSYLRINPKIPCFTNLSRLGLSKCHSIKDLTWILFAPNLVYLYIEDSREVGEIINKEKATNLTSITPFLKLERLILYNLPKLESIYWSPLHFPRLLIIHVLDCPKLRKLPLNATSVPLVEEFQIRMYPPGLGNELEWEDEDTKNRFVLSIKK</sequence>
<reference key="1">
    <citation type="journal article" date="2000" name="Nature">
        <title>Sequence and analysis of chromosome 1 of the plant Arabidopsis thaliana.</title>
        <authorList>
            <person name="Theologis A."/>
            <person name="Ecker J.R."/>
            <person name="Palm C.J."/>
            <person name="Federspiel N.A."/>
            <person name="Kaul S."/>
            <person name="White O."/>
            <person name="Alonso J."/>
            <person name="Altafi H."/>
            <person name="Araujo R."/>
            <person name="Bowman C.L."/>
            <person name="Brooks S.Y."/>
            <person name="Buehler E."/>
            <person name="Chan A."/>
            <person name="Chao Q."/>
            <person name="Chen H."/>
            <person name="Cheuk R.F."/>
            <person name="Chin C.W."/>
            <person name="Chung M.K."/>
            <person name="Conn L."/>
            <person name="Conway A.B."/>
            <person name="Conway A.R."/>
            <person name="Creasy T.H."/>
            <person name="Dewar K."/>
            <person name="Dunn P."/>
            <person name="Etgu P."/>
            <person name="Feldblyum T.V."/>
            <person name="Feng J.-D."/>
            <person name="Fong B."/>
            <person name="Fujii C.Y."/>
            <person name="Gill J.E."/>
            <person name="Goldsmith A.D."/>
            <person name="Haas B."/>
            <person name="Hansen N.F."/>
            <person name="Hughes B."/>
            <person name="Huizar L."/>
            <person name="Hunter J.L."/>
            <person name="Jenkins J."/>
            <person name="Johnson-Hopson C."/>
            <person name="Khan S."/>
            <person name="Khaykin E."/>
            <person name="Kim C.J."/>
            <person name="Koo H.L."/>
            <person name="Kremenetskaia I."/>
            <person name="Kurtz D.B."/>
            <person name="Kwan A."/>
            <person name="Lam B."/>
            <person name="Langin-Hooper S."/>
            <person name="Lee A."/>
            <person name="Lee J.M."/>
            <person name="Lenz C.A."/>
            <person name="Li J.H."/>
            <person name="Li Y.-P."/>
            <person name="Lin X."/>
            <person name="Liu S.X."/>
            <person name="Liu Z.A."/>
            <person name="Luros J.S."/>
            <person name="Maiti R."/>
            <person name="Marziali A."/>
            <person name="Militscher J."/>
            <person name="Miranda M."/>
            <person name="Nguyen M."/>
            <person name="Nierman W.C."/>
            <person name="Osborne B.I."/>
            <person name="Pai G."/>
            <person name="Peterson J."/>
            <person name="Pham P.K."/>
            <person name="Rizzo M."/>
            <person name="Rooney T."/>
            <person name="Rowley D."/>
            <person name="Sakano H."/>
            <person name="Salzberg S.L."/>
            <person name="Schwartz J.R."/>
            <person name="Shinn P."/>
            <person name="Southwick A.M."/>
            <person name="Sun H."/>
            <person name="Tallon L.J."/>
            <person name="Tambunga G."/>
            <person name="Toriumi M.J."/>
            <person name="Town C.D."/>
            <person name="Utterback T."/>
            <person name="Van Aken S."/>
            <person name="Vaysberg M."/>
            <person name="Vysotskaia V.S."/>
            <person name="Walker M."/>
            <person name="Wu D."/>
            <person name="Yu G."/>
            <person name="Fraser C.M."/>
            <person name="Venter J.C."/>
            <person name="Davis R.W."/>
        </authorList>
    </citation>
    <scope>NUCLEOTIDE SEQUENCE [LARGE SCALE GENOMIC DNA]</scope>
    <source>
        <strain>cv. Columbia</strain>
    </source>
</reference>
<reference key="2">
    <citation type="journal article" date="2017" name="Plant J.">
        <title>Araport11: a complete reannotation of the Arabidopsis thaliana reference genome.</title>
        <authorList>
            <person name="Cheng C.Y."/>
            <person name="Krishnakumar V."/>
            <person name="Chan A.P."/>
            <person name="Thibaud-Nissen F."/>
            <person name="Schobel S."/>
            <person name="Town C.D."/>
        </authorList>
    </citation>
    <scope>GENOME REANNOTATION</scope>
    <source>
        <strain>cv. Columbia</strain>
    </source>
</reference>
<reference key="3">
    <citation type="submission" date="2006-07" db="EMBL/GenBank/DDBJ databases">
        <title>Large-scale analysis of RIKEN Arabidopsis full-length (RAFL) cDNAs.</title>
        <authorList>
            <person name="Totoki Y."/>
            <person name="Seki M."/>
            <person name="Ishida J."/>
            <person name="Nakajima M."/>
            <person name="Enju A."/>
            <person name="Kamiya A."/>
            <person name="Narusaka M."/>
            <person name="Shin-i T."/>
            <person name="Nakagawa M."/>
            <person name="Sakamoto N."/>
            <person name="Oishi K."/>
            <person name="Kohara Y."/>
            <person name="Kobayashi M."/>
            <person name="Toyoda A."/>
            <person name="Sakaki Y."/>
            <person name="Sakurai T."/>
            <person name="Iida K."/>
            <person name="Akiyama K."/>
            <person name="Satou M."/>
            <person name="Toyoda T."/>
            <person name="Konagaya A."/>
            <person name="Carninci P."/>
            <person name="Kawai J."/>
            <person name="Hayashizaki Y."/>
            <person name="Shinozaki K."/>
        </authorList>
    </citation>
    <scope>NUCLEOTIDE SEQUENCE [LARGE SCALE MRNA]</scope>
    <source>
        <strain>cv. Columbia</strain>
    </source>
</reference>
<reference key="4">
    <citation type="journal article" date="2003" name="Science">
        <title>Empirical analysis of transcriptional activity in the Arabidopsis genome.</title>
        <authorList>
            <person name="Yamada K."/>
            <person name="Lim J."/>
            <person name="Dale J.M."/>
            <person name="Chen H."/>
            <person name="Shinn P."/>
            <person name="Palm C.J."/>
            <person name="Southwick A.M."/>
            <person name="Wu H.C."/>
            <person name="Kim C.J."/>
            <person name="Nguyen M."/>
            <person name="Pham P.K."/>
            <person name="Cheuk R.F."/>
            <person name="Karlin-Newmann G."/>
            <person name="Liu S.X."/>
            <person name="Lam B."/>
            <person name="Sakano H."/>
            <person name="Wu T."/>
            <person name="Yu G."/>
            <person name="Miranda M."/>
            <person name="Quach H.L."/>
            <person name="Tripp M."/>
            <person name="Chang C.H."/>
            <person name="Lee J.M."/>
            <person name="Toriumi M.J."/>
            <person name="Chan M.M."/>
            <person name="Tang C.C."/>
            <person name="Onodera C.S."/>
            <person name="Deng J.M."/>
            <person name="Akiyama K."/>
            <person name="Ansari Y."/>
            <person name="Arakawa T."/>
            <person name="Banh J."/>
            <person name="Banno F."/>
            <person name="Bowser L."/>
            <person name="Brooks S.Y."/>
            <person name="Carninci P."/>
            <person name="Chao Q."/>
            <person name="Choy N."/>
            <person name="Enju A."/>
            <person name="Goldsmith A.D."/>
            <person name="Gurjal M."/>
            <person name="Hansen N.F."/>
            <person name="Hayashizaki Y."/>
            <person name="Johnson-Hopson C."/>
            <person name="Hsuan V.W."/>
            <person name="Iida K."/>
            <person name="Karnes M."/>
            <person name="Khan S."/>
            <person name="Koesema E."/>
            <person name="Ishida J."/>
            <person name="Jiang P.X."/>
            <person name="Jones T."/>
            <person name="Kawai J."/>
            <person name="Kamiya A."/>
            <person name="Meyers C."/>
            <person name="Nakajima M."/>
            <person name="Narusaka M."/>
            <person name="Seki M."/>
            <person name="Sakurai T."/>
            <person name="Satou M."/>
            <person name="Tamse R."/>
            <person name="Vaysberg M."/>
            <person name="Wallender E.K."/>
            <person name="Wong C."/>
            <person name="Yamamura Y."/>
            <person name="Yuan S."/>
            <person name="Shinozaki K."/>
            <person name="Davis R.W."/>
            <person name="Theologis A."/>
            <person name="Ecker J.R."/>
        </authorList>
    </citation>
    <scope>NUCLEOTIDE SEQUENCE [LARGE SCALE MRNA] OF 1-704</scope>
    <source>
        <strain>cv. Columbia</strain>
    </source>
</reference>
<accession>O64790</accession>
<accession>Q8L4D2</accession>
<organism>
    <name type="scientific">Arabidopsis thaliana</name>
    <name type="common">Mouse-ear cress</name>
    <dbReference type="NCBI Taxonomy" id="3702"/>
    <lineage>
        <taxon>Eukaryota</taxon>
        <taxon>Viridiplantae</taxon>
        <taxon>Streptophyta</taxon>
        <taxon>Embryophyta</taxon>
        <taxon>Tracheophyta</taxon>
        <taxon>Spermatophyta</taxon>
        <taxon>Magnoliopsida</taxon>
        <taxon>eudicotyledons</taxon>
        <taxon>Gunneridae</taxon>
        <taxon>Pentapetalae</taxon>
        <taxon>rosids</taxon>
        <taxon>malvids</taxon>
        <taxon>Brassicales</taxon>
        <taxon>Brassicaceae</taxon>
        <taxon>Camelineae</taxon>
        <taxon>Arabidopsis</taxon>
    </lineage>
</organism>
<evidence type="ECO:0000250" key="1"/>
<evidence type="ECO:0000255" key="2"/>
<evidence type="ECO:0000305" key="3"/>
<protein>
    <recommendedName>
        <fullName>Probable disease resistance protein At1g61300</fullName>
    </recommendedName>
</protein>
<gene>
    <name type="ordered locus">At1g61300</name>
    <name type="ORF">T1F9.21</name>
</gene>
<dbReference type="EMBL" id="AC004255">
    <property type="protein sequence ID" value="AAC13911.1"/>
    <property type="status" value="ALT_SEQ"/>
    <property type="molecule type" value="Genomic_DNA"/>
</dbReference>
<dbReference type="EMBL" id="CP002684">
    <property type="protein sequence ID" value="AEE33818.1"/>
    <property type="molecule type" value="Genomic_DNA"/>
</dbReference>
<dbReference type="EMBL" id="AK226587">
    <property type="status" value="NOT_ANNOTATED_CDS"/>
    <property type="molecule type" value="mRNA"/>
</dbReference>
<dbReference type="EMBL" id="AY099608">
    <property type="protein sequence ID" value="AAM20459.1"/>
    <property type="status" value="ALT_SEQ"/>
    <property type="molecule type" value="mRNA"/>
</dbReference>
<dbReference type="EMBL" id="AY128858">
    <property type="protein sequence ID" value="AAM91258.1"/>
    <property type="status" value="ALT_SEQ"/>
    <property type="molecule type" value="mRNA"/>
</dbReference>
<dbReference type="RefSeq" id="NP_176325.2">
    <property type="nucleotide sequence ID" value="NM_104811.4"/>
</dbReference>
<dbReference type="SMR" id="O64790"/>
<dbReference type="FunCoup" id="O64790">
    <property type="interactions" value="175"/>
</dbReference>
<dbReference type="STRING" id="3702.O64790"/>
<dbReference type="iPTMnet" id="O64790"/>
<dbReference type="PaxDb" id="3702-AT1G61300.1"/>
<dbReference type="ProteomicsDB" id="224314"/>
<dbReference type="EnsemblPlants" id="AT1G61300.1">
    <property type="protein sequence ID" value="AT1G61300.1"/>
    <property type="gene ID" value="AT1G61300"/>
</dbReference>
<dbReference type="GeneID" id="842424"/>
<dbReference type="Gramene" id="AT1G61300.1">
    <property type="protein sequence ID" value="AT1G61300.1"/>
    <property type="gene ID" value="AT1G61300"/>
</dbReference>
<dbReference type="KEGG" id="ath:AT1G61300"/>
<dbReference type="Araport" id="AT1G61300"/>
<dbReference type="TAIR" id="AT1G61300"/>
<dbReference type="eggNOG" id="KOG4658">
    <property type="taxonomic scope" value="Eukaryota"/>
</dbReference>
<dbReference type="HOGENOM" id="CLU_000427_4_0_1"/>
<dbReference type="InParanoid" id="O64790"/>
<dbReference type="OMA" id="ISHTHIK"/>
<dbReference type="PhylomeDB" id="O64790"/>
<dbReference type="PRO" id="PR:O64790"/>
<dbReference type="Proteomes" id="UP000006548">
    <property type="component" value="Chromosome 1"/>
</dbReference>
<dbReference type="ExpressionAtlas" id="O64790">
    <property type="expression patterns" value="baseline and differential"/>
</dbReference>
<dbReference type="GO" id="GO:0005886">
    <property type="term" value="C:plasma membrane"/>
    <property type="evidence" value="ECO:0007669"/>
    <property type="project" value="UniProtKB-SubCell"/>
</dbReference>
<dbReference type="GO" id="GO:0043531">
    <property type="term" value="F:ADP binding"/>
    <property type="evidence" value="ECO:0007669"/>
    <property type="project" value="InterPro"/>
</dbReference>
<dbReference type="GO" id="GO:0005524">
    <property type="term" value="F:ATP binding"/>
    <property type="evidence" value="ECO:0007669"/>
    <property type="project" value="UniProtKB-KW"/>
</dbReference>
<dbReference type="GO" id="GO:0006952">
    <property type="term" value="P:defense response"/>
    <property type="evidence" value="ECO:0007669"/>
    <property type="project" value="UniProtKB-KW"/>
</dbReference>
<dbReference type="FunFam" id="3.80.10.10:FF:001644">
    <property type="entry name" value="LRR and NB-ARC domains-containing disease resistance protein"/>
    <property type="match status" value="1"/>
</dbReference>
<dbReference type="FunFam" id="3.80.10.10:FF:001429">
    <property type="entry name" value="Probable disease resistance protein At1g61190"/>
    <property type="match status" value="1"/>
</dbReference>
<dbReference type="FunFam" id="3.40.50.300:FF:001091">
    <property type="entry name" value="Probable disease resistance protein At1g61300"/>
    <property type="match status" value="1"/>
</dbReference>
<dbReference type="FunFam" id="1.10.10.10:FF:000322">
    <property type="entry name" value="Probable disease resistance protein At1g63360"/>
    <property type="match status" value="1"/>
</dbReference>
<dbReference type="FunFam" id="1.10.8.430:FF:000003">
    <property type="entry name" value="Probable disease resistance protein At5g66910"/>
    <property type="match status" value="1"/>
</dbReference>
<dbReference type="Gene3D" id="1.10.8.430">
    <property type="entry name" value="Helical domain of apoptotic protease-activating factors"/>
    <property type="match status" value="1"/>
</dbReference>
<dbReference type="Gene3D" id="3.40.50.300">
    <property type="entry name" value="P-loop containing nucleotide triphosphate hydrolases"/>
    <property type="match status" value="1"/>
</dbReference>
<dbReference type="Gene3D" id="3.80.10.10">
    <property type="entry name" value="Ribonuclease Inhibitor"/>
    <property type="match status" value="2"/>
</dbReference>
<dbReference type="Gene3D" id="1.10.10.10">
    <property type="entry name" value="Winged helix-like DNA-binding domain superfamily/Winged helix DNA-binding domain"/>
    <property type="match status" value="1"/>
</dbReference>
<dbReference type="InterPro" id="IPR042197">
    <property type="entry name" value="Apaf_helical"/>
</dbReference>
<dbReference type="InterPro" id="IPR032675">
    <property type="entry name" value="LRR_dom_sf"/>
</dbReference>
<dbReference type="InterPro" id="IPR055414">
    <property type="entry name" value="LRR_R13L4/SHOC2-like"/>
</dbReference>
<dbReference type="InterPro" id="IPR002182">
    <property type="entry name" value="NB-ARC"/>
</dbReference>
<dbReference type="InterPro" id="IPR027417">
    <property type="entry name" value="P-loop_NTPase"/>
</dbReference>
<dbReference type="InterPro" id="IPR050905">
    <property type="entry name" value="Plant_NBS-LRR"/>
</dbReference>
<dbReference type="InterPro" id="IPR036388">
    <property type="entry name" value="WH-like_DNA-bd_sf"/>
</dbReference>
<dbReference type="PANTHER" id="PTHR33463:SF220">
    <property type="entry name" value="NB-ARC DOMAIN-CONTAINING PROTEIN"/>
    <property type="match status" value="1"/>
</dbReference>
<dbReference type="PANTHER" id="PTHR33463">
    <property type="entry name" value="NB-ARC DOMAIN-CONTAINING PROTEIN-RELATED"/>
    <property type="match status" value="1"/>
</dbReference>
<dbReference type="Pfam" id="PF23598">
    <property type="entry name" value="LRR_14"/>
    <property type="match status" value="1"/>
</dbReference>
<dbReference type="Pfam" id="PF00931">
    <property type="entry name" value="NB-ARC"/>
    <property type="match status" value="1"/>
</dbReference>
<dbReference type="Pfam" id="PF23559">
    <property type="entry name" value="WH_DRP"/>
    <property type="match status" value="1"/>
</dbReference>
<dbReference type="PRINTS" id="PR00364">
    <property type="entry name" value="DISEASERSIST"/>
</dbReference>
<dbReference type="SUPFAM" id="SSF52058">
    <property type="entry name" value="L domain-like"/>
    <property type="match status" value="1"/>
</dbReference>
<dbReference type="SUPFAM" id="SSF52540">
    <property type="entry name" value="P-loop containing nucleoside triphosphate hydrolases"/>
    <property type="match status" value="1"/>
</dbReference>
<name>DRL17_ARATH</name>